<feature type="initiator methionine" description="Removed; by host" evidence="3">
    <location>
        <position position="1"/>
    </location>
</feature>
<feature type="chain" id="PRO_0000319074" description="Large envelope protein" evidence="3">
    <location>
        <begin position="2"/>
        <end position="400"/>
    </location>
</feature>
<feature type="topological domain" description="Intravirion; in internal conformation" evidence="3">
    <location>
        <begin position="2"/>
        <end position="253"/>
    </location>
</feature>
<feature type="topological domain" description="Virion surface; in external conformation" evidence="3">
    <location>
        <begin position="2"/>
        <end position="181"/>
    </location>
</feature>
<feature type="transmembrane region" description="Helical; Name=TM1; Note=In external conformation" evidence="3">
    <location>
        <begin position="182"/>
        <end position="202"/>
    </location>
</feature>
<feature type="topological domain" description="Intravirion; in external conformation" evidence="3">
    <location>
        <begin position="203"/>
        <end position="253"/>
    </location>
</feature>
<feature type="transmembrane region" description="Helical; Name=TM2" evidence="3">
    <location>
        <begin position="254"/>
        <end position="274"/>
    </location>
</feature>
<feature type="topological domain" description="Virion surface" evidence="3">
    <location>
        <begin position="275"/>
        <end position="348"/>
    </location>
</feature>
<feature type="transmembrane region" description="Helical" evidence="3">
    <location>
        <begin position="349"/>
        <end position="369"/>
    </location>
</feature>
<feature type="topological domain" description="Intravirion" evidence="3">
    <location>
        <begin position="370"/>
        <end position="375"/>
    </location>
</feature>
<feature type="transmembrane region" description="Helical; Name=TM3" evidence="3">
    <location>
        <begin position="376"/>
        <end position="398"/>
    </location>
</feature>
<feature type="topological domain" description="Virion surface" evidence="3">
    <location>
        <begin position="399"/>
        <end position="400"/>
    </location>
</feature>
<feature type="region of interest" description="Pre-S" evidence="3">
    <location>
        <begin position="2"/>
        <end position="174"/>
    </location>
</feature>
<feature type="region of interest" description="Pre-S1" evidence="3">
    <location>
        <begin position="2"/>
        <end position="119"/>
    </location>
</feature>
<feature type="region of interest" description="Disordered" evidence="4">
    <location>
        <begin position="84"/>
        <end position="116"/>
    </location>
</feature>
<feature type="region of interest" description="Pre-S2" evidence="3">
    <location>
        <begin position="120"/>
        <end position="174"/>
    </location>
</feature>
<feature type="compositionally biased region" description="Polar residues" evidence="4">
    <location>
        <begin position="96"/>
        <end position="106"/>
    </location>
</feature>
<feature type="lipid moiety-binding region" description="N-myristoyl glycine; by host" evidence="3">
    <location>
        <position position="2"/>
    </location>
</feature>
<feature type="glycosylation site" description="N-linked (GlcNAc...) asparagine; by host" evidence="3">
    <location>
        <position position="320"/>
    </location>
</feature>
<feature type="splice variant" id="VSP_031365" description="In isoform S." evidence="5">
    <location>
        <begin position="1"/>
        <end position="174"/>
    </location>
</feature>
<feature type="splice variant" id="VSP_031366" description="In isoform M." evidence="5">
    <location>
        <begin position="1"/>
        <end position="119"/>
    </location>
</feature>
<feature type="modified residue" description="N-acetylmethionine" evidence="5">
    <location sequence="Q4R1R8-2">
        <position position="1"/>
    </location>
</feature>
<feature type="glycosylation site" description="N-linked (GlcNAc...) asparagine" evidence="5">
    <location sequence="Q4R1R8-2">
        <position position="4"/>
    </location>
</feature>
<dbReference type="EMBL" id="AB194952">
    <property type="protein sequence ID" value="BAE00098.1"/>
    <property type="molecule type" value="Genomic_DNA"/>
</dbReference>
<dbReference type="SMR" id="Q4R1R8"/>
<dbReference type="GlyCosmos" id="Q4R1R8">
    <property type="glycosylation" value="2 sites, No reported glycans"/>
</dbReference>
<dbReference type="Proteomes" id="UP000007912">
    <property type="component" value="Genome"/>
</dbReference>
<dbReference type="GO" id="GO:0016020">
    <property type="term" value="C:membrane"/>
    <property type="evidence" value="ECO:0007669"/>
    <property type="project" value="UniProtKB-UniRule"/>
</dbReference>
<dbReference type="GO" id="GO:0019031">
    <property type="term" value="C:viral envelope"/>
    <property type="evidence" value="ECO:0007669"/>
    <property type="project" value="UniProtKB-KW"/>
</dbReference>
<dbReference type="GO" id="GO:0055036">
    <property type="term" value="C:virion membrane"/>
    <property type="evidence" value="ECO:0007669"/>
    <property type="project" value="UniProtKB-SubCell"/>
</dbReference>
<dbReference type="GO" id="GO:0075513">
    <property type="term" value="P:caveolin-mediated endocytosis of virus by host cell"/>
    <property type="evidence" value="ECO:0007669"/>
    <property type="project" value="UniProtKB-KW"/>
</dbReference>
<dbReference type="GO" id="GO:0039654">
    <property type="term" value="P:fusion of virus membrane with host endosome membrane"/>
    <property type="evidence" value="ECO:0007669"/>
    <property type="project" value="UniProtKB-KW"/>
</dbReference>
<dbReference type="GO" id="GO:0019062">
    <property type="term" value="P:virion attachment to host cell"/>
    <property type="evidence" value="ECO:0007669"/>
    <property type="project" value="UniProtKB-UniRule"/>
</dbReference>
<dbReference type="HAMAP" id="MF_04075">
    <property type="entry name" value="HBV_HBSAG"/>
    <property type="match status" value="1"/>
</dbReference>
<dbReference type="InterPro" id="IPR000349">
    <property type="entry name" value="HBV_HBSAG"/>
</dbReference>
<dbReference type="Pfam" id="PF00695">
    <property type="entry name" value="vMSA"/>
    <property type="match status" value="1"/>
</dbReference>
<name>HBSAG_HBVA9</name>
<organism>
    <name type="scientific">Hepatitis B virus genotype A3 (isolate Cameroon/CMR711/1994)</name>
    <name type="common">HBV-A</name>
    <dbReference type="NCBI Taxonomy" id="489459"/>
    <lineage>
        <taxon>Viruses</taxon>
        <taxon>Riboviria</taxon>
        <taxon>Pararnavirae</taxon>
        <taxon>Artverviricota</taxon>
        <taxon>Revtraviricetes</taxon>
        <taxon>Blubervirales</taxon>
        <taxon>Hepadnaviridae</taxon>
        <taxon>Orthohepadnavirus</taxon>
        <taxon>Hepatitis B virus</taxon>
    </lineage>
</organism>
<evidence type="ECO:0000250" key="1">
    <source>
        <dbReference type="UniProtKB" id="P03138"/>
    </source>
</evidence>
<evidence type="ECO:0000250" key="2">
    <source>
        <dbReference type="UniProtKB" id="P03141"/>
    </source>
</evidence>
<evidence type="ECO:0000255" key="3">
    <source>
        <dbReference type="HAMAP-Rule" id="MF_04075"/>
    </source>
</evidence>
<evidence type="ECO:0000256" key="4">
    <source>
        <dbReference type="SAM" id="MobiDB-lite"/>
    </source>
</evidence>
<evidence type="ECO:0000305" key="5"/>
<gene>
    <name evidence="3" type="primary">S</name>
</gene>
<organismHost>
    <name type="scientific">Homo sapiens</name>
    <name type="common">Human</name>
    <dbReference type="NCBI Taxonomy" id="9606"/>
</organismHost>
<organismHost>
    <name type="scientific">Pan troglodytes</name>
    <name type="common">Chimpanzee</name>
    <dbReference type="NCBI Taxonomy" id="9598"/>
</organismHost>
<reference key="1">
    <citation type="journal article" date="2005" name="J. Gen. Virol.">
        <title>A new subtype (subgenotype) Ac (A3) of hepatitis B virus and recombination between genotypes A and E in Cameroon.</title>
        <authorList>
            <person name="Kurbanov F."/>
            <person name="Tanaka Y."/>
            <person name="Fujiwara K."/>
            <person name="Sugauchi F."/>
            <person name="Mbanya D."/>
            <person name="Zekeng L."/>
            <person name="Ndembi N."/>
            <person name="Ngansop C."/>
            <person name="Kaptue L."/>
            <person name="Miura T."/>
            <person name="Ido E."/>
            <person name="Hayami M."/>
            <person name="Ichimura H."/>
            <person name="Mizokami M."/>
        </authorList>
    </citation>
    <scope>NUCLEOTIDE SEQUENCE [GENOMIC DNA]</scope>
</reference>
<reference key="2">
    <citation type="journal article" date="1996" name="Intervirology">
        <title>Functions of the large hepatitis B virus surface protein in viral particle morphogenesis.</title>
        <authorList>
            <person name="Bruss V."/>
            <person name="Gerhardt E."/>
            <person name="Vieluf K."/>
            <person name="Wunderlich G."/>
        </authorList>
    </citation>
    <scope>REVIEW</scope>
</reference>
<reference key="3">
    <citation type="journal article" date="1998" name="Adv. Exp. Med. Biol.">
        <title>Role of glycan processing in hepatitis B virus envelope protein trafficking.</title>
        <authorList>
            <person name="Block T.M."/>
            <person name="Lu X."/>
            <person name="Mehta A."/>
            <person name="Park J."/>
            <person name="Blumberg B.S."/>
            <person name="Dwek R."/>
        </authorList>
    </citation>
    <scope>REVIEW</scope>
</reference>
<reference key="4">
    <citation type="journal article" date="2004" name="Virus Res.">
        <title>Envelopment of the hepatitis B virus nucleocapsid.</title>
        <authorList>
            <person name="Bruss V."/>
        </authorList>
    </citation>
    <scope>REVIEW</scope>
</reference>
<reference key="5">
    <citation type="journal article" date="2006" name="Cancer Sci.">
        <title>Hepatitis B virus pre-S mutants, endoplasmic reticulum stress and hepatocarcinogenesis.</title>
        <authorList>
            <person name="Wang H.C."/>
            <person name="Huang W."/>
            <person name="Lai M.D."/>
            <person name="Su I.J."/>
        </authorList>
    </citation>
    <scope>REVIEW</scope>
</reference>
<proteinExistence type="evidence at protein level"/>
<keyword id="KW-0007">Acetylation</keyword>
<keyword id="KW-0024">Alternative initiation</keyword>
<keyword id="KW-0025">Alternative splicing</keyword>
<keyword id="KW-1166">Caveolin-mediated endocytosis of virus by host</keyword>
<keyword id="KW-1170">Fusion of virus membrane with host endosomal membrane</keyword>
<keyword id="KW-1168">Fusion of virus membrane with host membrane</keyword>
<keyword id="KW-0325">Glycoprotein</keyword>
<keyword id="KW-0945">Host-virus interaction</keyword>
<keyword id="KW-0449">Lipoprotein</keyword>
<keyword id="KW-0472">Membrane</keyword>
<keyword id="KW-0519">Myristate</keyword>
<keyword id="KW-0812">Transmembrane</keyword>
<keyword id="KW-1133">Transmembrane helix</keyword>
<keyword id="KW-1161">Viral attachment to host cell</keyword>
<keyword id="KW-0261">Viral envelope protein</keyword>
<keyword id="KW-1162">Viral penetration into host cytoplasm</keyword>
<keyword id="KW-0946">Virion</keyword>
<keyword id="KW-1164">Virus endocytosis by host</keyword>
<keyword id="KW-1160">Virus entry into host cell</keyword>
<accession>Q4R1R8</accession>
<comment type="function">
    <text evidence="3">The large envelope protein exists in two topological conformations, one which is termed 'external' or Le-HBsAg and the other 'internal' or Li-HBsAg. In its external conformation the protein attaches the virus to cell receptors and thereby initiating infection. This interaction determines the species specificity and liver tropism. This attachment induces virion internalization predominantly through caveolin-mediated endocytosis. The large envelope protein also assures fusion between virion membrane and endosomal membrane. In its internal conformation the protein plays a role in virion morphogenesis and mediates the contact with the nucleocapsid like a matrix protein.</text>
</comment>
<comment type="function">
    <text evidence="3">The middle envelope protein plays an important role in the budding of the virion. It is involved in the induction of budding in a nucleocapsid independent way. In this process the majority of envelope proteins bud to form subviral lipoprotein particles of 22 nm of diameter that do not contain a nucleocapsid.</text>
</comment>
<comment type="subunit">
    <molecule>Isoform L</molecule>
    <text evidence="2">In its internal form (Li-HBsAg), interacts with the capsid protein and with the isoform S. Interacts with host chaperone CANX.</text>
</comment>
<comment type="subunit">
    <molecule>Isoform M</molecule>
    <text evidence="2">Associates with host chaperone CANX through its pre-S2 N glycan; this association may be essential for isoform M proper secretion.</text>
</comment>
<comment type="subunit">
    <molecule>Isoform S</molecule>
    <text evidence="2">Interacts with isoform L. Interacts with the antigens of satellite virus HDV (HDVAgs); this interaction is required for encapsidation of HDV genomic RNA.</text>
</comment>
<comment type="subcellular location">
    <subcellularLocation>
        <location evidence="3">Virion membrane</location>
    </subcellularLocation>
</comment>
<comment type="alternative products">
    <event type="alternative splicing"/>
    <event type="alternative initiation"/>
    <isoform>
        <id>Q4R1R8-1</id>
        <name>L</name>
        <name>Large envelope protein</name>
        <name>LHB</name>
        <name>L-HBsAg</name>
        <sequence type="displayed"/>
    </isoform>
    <isoform>
        <id>Q4R1R8-2</id>
        <name>M</name>
        <name>Middle envelope protein</name>
        <name>MHB</name>
        <name>M-HBsAg</name>
        <sequence type="described" ref="VSP_031366"/>
    </isoform>
    <isoform>
        <id>Q4R1R8-3</id>
        <name>S</name>
        <name>Small envelope protein</name>
        <name>SHB</name>
        <name>S-HBsAg</name>
        <sequence type="described" ref="VSP_031365"/>
    </isoform>
</comment>
<comment type="domain">
    <text evidence="3">The large envelope protein is synthesized with the pre-S region at the cytosolic side of the endoplasmic reticulum and, hence will be within the virion after budding. Therefore the pre-S region is not N-glycosylated. Later a post-translational translocation of N-terminal pre-S and TM1 domains occur in about 50% of proteins at the virion surface. These molecules change their topology by an unknown mechanism, resulting in exposure of pre-S region at virion surface. For isoform M in contrast, the pre-S2 region is translocated cotranslationally to the endoplasmic reticulum lumen and is N-glycosylated.</text>
</comment>
<comment type="PTM">
    <text evidence="1 3">Isoform M is N-terminally acetylated by host at a ratio of 90%, and N-glycosylated by host at the pre-S2 region.</text>
</comment>
<comment type="PTM">
    <text evidence="3">Myristoylated.</text>
</comment>
<comment type="biotechnology">
    <text>Systematic vaccination of individuals at risk of exposure to the virus has been the main method of controlling the morbidity and mortality associated with hepatitis B. The first hepatitis B vaccine was manufactured by the purification and inactivation of HBsAg obtained from the plasma of chronic hepatitis B virus carriers. The vaccine is now produced by recombinant DNA techniques and expression of the S isoform in yeast cells. The pre-S region do not seem to induce strong enough antigenic response.</text>
</comment>
<comment type="similarity">
    <text evidence="3">Belongs to the orthohepadnavirus major surface antigen family.</text>
</comment>
<protein>
    <recommendedName>
        <fullName evidence="3">Large envelope protein</fullName>
    </recommendedName>
    <alternativeName>
        <fullName evidence="3">L glycoprotein</fullName>
    </alternativeName>
    <alternativeName>
        <fullName evidence="3">L-HBsAg</fullName>
        <shortName evidence="3">LHB</shortName>
    </alternativeName>
    <alternativeName>
        <fullName evidence="3">Large S protein</fullName>
    </alternativeName>
    <alternativeName>
        <fullName evidence="3">Large surface protein</fullName>
    </alternativeName>
    <alternativeName>
        <fullName evidence="3">Major surface antigen</fullName>
    </alternativeName>
</protein>
<sequence>MGGRLPKPRKGMGTNLSVPNPLGFFPDHQLDPAFGANSNNPDWDFNPIKDHWPQANQVGVGAFGPGFTPPHGGVLGWSPQAQGTLTTVPAVPPPASTNRQSGRQPTPISPPLRDSHPQAMQWNSTKFHQTLQDPRVRGLYFPAGGSSSGTVNPAPNIASHISSISSRIGDPAPTMENITSGFLGPLLVLQAGFFLLTRILTIPQSLDSWWTSLNFLGEAPVCLGQNSQSPTSNHSPTSCPPICPGYRWMCLRRFIIFLFILLLCLIFLLVLLDCQGMLPVCPLIPGSTTTSTGPCRTCTTPAQGNSMFPSCCCTKPTDGNCTCIPIPSSWAFAKYLWEWASVRFSWLSLLVPFVQWFVGLSPTVWLSVIWMMWYWGPSLYNILSPFIPLLPIFFCLWVYI</sequence>